<reference key="1">
    <citation type="journal article" date="1981" name="Hoppe-Seyler's Z. Physiol. Chem.">
        <title>The primary structure of adult hemoglobin of musk shrew (Suncus murinus).</title>
        <authorList>
            <person name="Maita T."/>
            <person name="Matsuda G."/>
            <person name="Takenaka O."/>
            <person name="Takahashi K."/>
        </authorList>
    </citation>
    <scope>PROTEIN SEQUENCE</scope>
</reference>
<sequence length="146" mass="15734">VHLSGEEKACVTGLWGKVNEDEVGAEALGRLLVVYPWTQRFFDSFGDLSSASAVMGNPKVKAHGKKVLHSLGEGVANLDNLKGTFAKLSELHCDKLHVDPENFRLLGNVLVVVLASKFGKEFTPPVQAAFQKVVAGVANALAHKYH</sequence>
<comment type="function">
    <text>Involved in oxygen transport from the lung to the various peripheral tissues.</text>
</comment>
<comment type="subunit">
    <text>Heterotetramer of two alpha chains and two beta chains.</text>
</comment>
<comment type="tissue specificity">
    <text>Red blood cells.</text>
</comment>
<comment type="similarity">
    <text evidence="3">Belongs to the globin family.</text>
</comment>
<proteinExistence type="evidence at protein level"/>
<accession>P02060</accession>
<gene>
    <name type="primary">HBB</name>
</gene>
<evidence type="ECO:0000250" key="1">
    <source>
        <dbReference type="UniProtKB" id="P02086"/>
    </source>
</evidence>
<evidence type="ECO:0000250" key="2">
    <source>
        <dbReference type="UniProtKB" id="P68871"/>
    </source>
</evidence>
<evidence type="ECO:0000255" key="3">
    <source>
        <dbReference type="PROSITE-ProRule" id="PRU00238"/>
    </source>
</evidence>
<keyword id="KW-0007">Acetylation</keyword>
<keyword id="KW-0903">Direct protein sequencing</keyword>
<keyword id="KW-0349">Heme</keyword>
<keyword id="KW-0408">Iron</keyword>
<keyword id="KW-0479">Metal-binding</keyword>
<keyword id="KW-0561">Oxygen transport</keyword>
<keyword id="KW-0597">Phosphoprotein</keyword>
<keyword id="KW-0702">S-nitrosylation</keyword>
<keyword id="KW-0813">Transport</keyword>
<feature type="chain" id="PRO_0000053119" description="Hemoglobin subunit beta">
    <location>
        <begin position="1"/>
        <end position="146"/>
    </location>
</feature>
<feature type="domain" description="Globin" evidence="3">
    <location>
        <begin position="2"/>
        <end position="146"/>
    </location>
</feature>
<feature type="binding site" description="distal binding residue">
    <location>
        <position position="63"/>
    </location>
    <ligand>
        <name>heme b</name>
        <dbReference type="ChEBI" id="CHEBI:60344"/>
    </ligand>
    <ligandPart>
        <name>Fe</name>
        <dbReference type="ChEBI" id="CHEBI:18248"/>
    </ligandPart>
</feature>
<feature type="binding site" description="proximal binding residue">
    <location>
        <position position="92"/>
    </location>
    <ligand>
        <name>heme b</name>
        <dbReference type="ChEBI" id="CHEBI:60344"/>
    </ligand>
    <ligandPart>
        <name>Fe</name>
        <dbReference type="ChEBI" id="CHEBI:18248"/>
    </ligandPart>
</feature>
<feature type="modified residue" description="N-acetylvaline" evidence="1">
    <location>
        <position position="1"/>
    </location>
</feature>
<feature type="modified residue" description="Phosphothreonine" evidence="2">
    <location>
        <position position="12"/>
    </location>
</feature>
<feature type="modified residue" description="Phosphoserine" evidence="2">
    <location>
        <position position="44"/>
    </location>
</feature>
<feature type="modified residue" description="N6-acetyllysine" evidence="2">
    <location>
        <position position="59"/>
    </location>
</feature>
<feature type="modified residue" description="N6-acetyllysine" evidence="2">
    <location>
        <position position="82"/>
    </location>
</feature>
<feature type="modified residue" description="S-nitrosocysteine" evidence="2">
    <location>
        <position position="93"/>
    </location>
</feature>
<feature type="modified residue" description="N6-acetyllysine" evidence="2">
    <location>
        <position position="144"/>
    </location>
</feature>
<organism>
    <name type="scientific">Suncus murinus</name>
    <name type="common">Asian house shrew</name>
    <name type="synonym">Musk shrew</name>
    <dbReference type="NCBI Taxonomy" id="9378"/>
    <lineage>
        <taxon>Eukaryota</taxon>
        <taxon>Metazoa</taxon>
        <taxon>Chordata</taxon>
        <taxon>Craniata</taxon>
        <taxon>Vertebrata</taxon>
        <taxon>Euteleostomi</taxon>
        <taxon>Mammalia</taxon>
        <taxon>Eutheria</taxon>
        <taxon>Laurasiatheria</taxon>
        <taxon>Eulipotyphla</taxon>
        <taxon>Soricidae</taxon>
        <taxon>Crocidurinae</taxon>
        <taxon>Suncus</taxon>
    </lineage>
</organism>
<protein>
    <recommendedName>
        <fullName>Hemoglobin subunit beta</fullName>
    </recommendedName>
    <alternativeName>
        <fullName>Beta-globin</fullName>
    </alternativeName>
    <alternativeName>
        <fullName>Hemoglobin beta chain</fullName>
    </alternativeName>
</protein>
<dbReference type="PIR" id="A02378">
    <property type="entry name" value="HBTSM"/>
</dbReference>
<dbReference type="SMR" id="P02060"/>
<dbReference type="GO" id="GO:0072562">
    <property type="term" value="C:blood microparticle"/>
    <property type="evidence" value="ECO:0007669"/>
    <property type="project" value="TreeGrafter"/>
</dbReference>
<dbReference type="GO" id="GO:0031838">
    <property type="term" value="C:haptoglobin-hemoglobin complex"/>
    <property type="evidence" value="ECO:0007669"/>
    <property type="project" value="TreeGrafter"/>
</dbReference>
<dbReference type="GO" id="GO:0005833">
    <property type="term" value="C:hemoglobin complex"/>
    <property type="evidence" value="ECO:0007669"/>
    <property type="project" value="InterPro"/>
</dbReference>
<dbReference type="GO" id="GO:0031720">
    <property type="term" value="F:haptoglobin binding"/>
    <property type="evidence" value="ECO:0007669"/>
    <property type="project" value="TreeGrafter"/>
</dbReference>
<dbReference type="GO" id="GO:0020037">
    <property type="term" value="F:heme binding"/>
    <property type="evidence" value="ECO:0007669"/>
    <property type="project" value="InterPro"/>
</dbReference>
<dbReference type="GO" id="GO:0031721">
    <property type="term" value="F:hemoglobin alpha binding"/>
    <property type="evidence" value="ECO:0007669"/>
    <property type="project" value="TreeGrafter"/>
</dbReference>
<dbReference type="GO" id="GO:0046872">
    <property type="term" value="F:metal ion binding"/>
    <property type="evidence" value="ECO:0007669"/>
    <property type="project" value="UniProtKB-KW"/>
</dbReference>
<dbReference type="GO" id="GO:0043177">
    <property type="term" value="F:organic acid binding"/>
    <property type="evidence" value="ECO:0007669"/>
    <property type="project" value="TreeGrafter"/>
</dbReference>
<dbReference type="GO" id="GO:0019825">
    <property type="term" value="F:oxygen binding"/>
    <property type="evidence" value="ECO:0007669"/>
    <property type="project" value="InterPro"/>
</dbReference>
<dbReference type="GO" id="GO:0005344">
    <property type="term" value="F:oxygen carrier activity"/>
    <property type="evidence" value="ECO:0007669"/>
    <property type="project" value="UniProtKB-KW"/>
</dbReference>
<dbReference type="GO" id="GO:0004601">
    <property type="term" value="F:peroxidase activity"/>
    <property type="evidence" value="ECO:0007669"/>
    <property type="project" value="TreeGrafter"/>
</dbReference>
<dbReference type="GO" id="GO:0042744">
    <property type="term" value="P:hydrogen peroxide catabolic process"/>
    <property type="evidence" value="ECO:0007669"/>
    <property type="project" value="TreeGrafter"/>
</dbReference>
<dbReference type="CDD" id="cd08925">
    <property type="entry name" value="Hb-beta-like"/>
    <property type="match status" value="1"/>
</dbReference>
<dbReference type="FunFam" id="1.10.490.10:FF:000001">
    <property type="entry name" value="Hemoglobin subunit beta"/>
    <property type="match status" value="1"/>
</dbReference>
<dbReference type="Gene3D" id="1.10.490.10">
    <property type="entry name" value="Globins"/>
    <property type="match status" value="1"/>
</dbReference>
<dbReference type="InterPro" id="IPR000971">
    <property type="entry name" value="Globin"/>
</dbReference>
<dbReference type="InterPro" id="IPR009050">
    <property type="entry name" value="Globin-like_sf"/>
</dbReference>
<dbReference type="InterPro" id="IPR012292">
    <property type="entry name" value="Globin/Proto"/>
</dbReference>
<dbReference type="InterPro" id="IPR002337">
    <property type="entry name" value="Hemoglobin_b"/>
</dbReference>
<dbReference type="InterPro" id="IPR050056">
    <property type="entry name" value="Hemoglobin_oxygen_transport"/>
</dbReference>
<dbReference type="PANTHER" id="PTHR11442">
    <property type="entry name" value="HEMOGLOBIN FAMILY MEMBER"/>
    <property type="match status" value="1"/>
</dbReference>
<dbReference type="PANTHER" id="PTHR11442:SF42">
    <property type="entry name" value="HEMOGLOBIN SUBUNIT BETA"/>
    <property type="match status" value="1"/>
</dbReference>
<dbReference type="Pfam" id="PF00042">
    <property type="entry name" value="Globin"/>
    <property type="match status" value="1"/>
</dbReference>
<dbReference type="PRINTS" id="PR00814">
    <property type="entry name" value="BETAHAEM"/>
</dbReference>
<dbReference type="SUPFAM" id="SSF46458">
    <property type="entry name" value="Globin-like"/>
    <property type="match status" value="1"/>
</dbReference>
<dbReference type="PROSITE" id="PS01033">
    <property type="entry name" value="GLOBIN"/>
    <property type="match status" value="1"/>
</dbReference>
<name>HBB_SUNMU</name>